<reference key="1">
    <citation type="journal article" date="2005" name="Science">
        <title>The transcriptional landscape of the mammalian genome.</title>
        <authorList>
            <person name="Carninci P."/>
            <person name="Kasukawa T."/>
            <person name="Katayama S."/>
            <person name="Gough J."/>
            <person name="Frith M.C."/>
            <person name="Maeda N."/>
            <person name="Oyama R."/>
            <person name="Ravasi T."/>
            <person name="Lenhard B."/>
            <person name="Wells C."/>
            <person name="Kodzius R."/>
            <person name="Shimokawa K."/>
            <person name="Bajic V.B."/>
            <person name="Brenner S.E."/>
            <person name="Batalov S."/>
            <person name="Forrest A.R."/>
            <person name="Zavolan M."/>
            <person name="Davis M.J."/>
            <person name="Wilming L.G."/>
            <person name="Aidinis V."/>
            <person name="Allen J.E."/>
            <person name="Ambesi-Impiombato A."/>
            <person name="Apweiler R."/>
            <person name="Aturaliya R.N."/>
            <person name="Bailey T.L."/>
            <person name="Bansal M."/>
            <person name="Baxter L."/>
            <person name="Beisel K.W."/>
            <person name="Bersano T."/>
            <person name="Bono H."/>
            <person name="Chalk A.M."/>
            <person name="Chiu K.P."/>
            <person name="Choudhary V."/>
            <person name="Christoffels A."/>
            <person name="Clutterbuck D.R."/>
            <person name="Crowe M.L."/>
            <person name="Dalla E."/>
            <person name="Dalrymple B.P."/>
            <person name="de Bono B."/>
            <person name="Della Gatta G."/>
            <person name="di Bernardo D."/>
            <person name="Down T."/>
            <person name="Engstrom P."/>
            <person name="Fagiolini M."/>
            <person name="Faulkner G."/>
            <person name="Fletcher C.F."/>
            <person name="Fukushima T."/>
            <person name="Furuno M."/>
            <person name="Futaki S."/>
            <person name="Gariboldi M."/>
            <person name="Georgii-Hemming P."/>
            <person name="Gingeras T.R."/>
            <person name="Gojobori T."/>
            <person name="Green R.E."/>
            <person name="Gustincich S."/>
            <person name="Harbers M."/>
            <person name="Hayashi Y."/>
            <person name="Hensch T.K."/>
            <person name="Hirokawa N."/>
            <person name="Hill D."/>
            <person name="Huminiecki L."/>
            <person name="Iacono M."/>
            <person name="Ikeo K."/>
            <person name="Iwama A."/>
            <person name="Ishikawa T."/>
            <person name="Jakt M."/>
            <person name="Kanapin A."/>
            <person name="Katoh M."/>
            <person name="Kawasawa Y."/>
            <person name="Kelso J."/>
            <person name="Kitamura H."/>
            <person name="Kitano H."/>
            <person name="Kollias G."/>
            <person name="Krishnan S.P."/>
            <person name="Kruger A."/>
            <person name="Kummerfeld S.K."/>
            <person name="Kurochkin I.V."/>
            <person name="Lareau L.F."/>
            <person name="Lazarevic D."/>
            <person name="Lipovich L."/>
            <person name="Liu J."/>
            <person name="Liuni S."/>
            <person name="McWilliam S."/>
            <person name="Madan Babu M."/>
            <person name="Madera M."/>
            <person name="Marchionni L."/>
            <person name="Matsuda H."/>
            <person name="Matsuzawa S."/>
            <person name="Miki H."/>
            <person name="Mignone F."/>
            <person name="Miyake S."/>
            <person name="Morris K."/>
            <person name="Mottagui-Tabar S."/>
            <person name="Mulder N."/>
            <person name="Nakano N."/>
            <person name="Nakauchi H."/>
            <person name="Ng P."/>
            <person name="Nilsson R."/>
            <person name="Nishiguchi S."/>
            <person name="Nishikawa S."/>
            <person name="Nori F."/>
            <person name="Ohara O."/>
            <person name="Okazaki Y."/>
            <person name="Orlando V."/>
            <person name="Pang K.C."/>
            <person name="Pavan W.J."/>
            <person name="Pavesi G."/>
            <person name="Pesole G."/>
            <person name="Petrovsky N."/>
            <person name="Piazza S."/>
            <person name="Reed J."/>
            <person name="Reid J.F."/>
            <person name="Ring B.Z."/>
            <person name="Ringwald M."/>
            <person name="Rost B."/>
            <person name="Ruan Y."/>
            <person name="Salzberg S.L."/>
            <person name="Sandelin A."/>
            <person name="Schneider C."/>
            <person name="Schoenbach C."/>
            <person name="Sekiguchi K."/>
            <person name="Semple C.A."/>
            <person name="Seno S."/>
            <person name="Sessa L."/>
            <person name="Sheng Y."/>
            <person name="Shibata Y."/>
            <person name="Shimada H."/>
            <person name="Shimada K."/>
            <person name="Silva D."/>
            <person name="Sinclair B."/>
            <person name="Sperling S."/>
            <person name="Stupka E."/>
            <person name="Sugiura K."/>
            <person name="Sultana R."/>
            <person name="Takenaka Y."/>
            <person name="Taki K."/>
            <person name="Tammoja K."/>
            <person name="Tan S.L."/>
            <person name="Tang S."/>
            <person name="Taylor M.S."/>
            <person name="Tegner J."/>
            <person name="Teichmann S.A."/>
            <person name="Ueda H.R."/>
            <person name="van Nimwegen E."/>
            <person name="Verardo R."/>
            <person name="Wei C.L."/>
            <person name="Yagi K."/>
            <person name="Yamanishi H."/>
            <person name="Zabarovsky E."/>
            <person name="Zhu S."/>
            <person name="Zimmer A."/>
            <person name="Hide W."/>
            <person name="Bult C."/>
            <person name="Grimmond S.M."/>
            <person name="Teasdale R.D."/>
            <person name="Liu E.T."/>
            <person name="Brusic V."/>
            <person name="Quackenbush J."/>
            <person name="Wahlestedt C."/>
            <person name="Mattick J.S."/>
            <person name="Hume D.A."/>
            <person name="Kai C."/>
            <person name="Sasaki D."/>
            <person name="Tomaru Y."/>
            <person name="Fukuda S."/>
            <person name="Kanamori-Katayama M."/>
            <person name="Suzuki M."/>
            <person name="Aoki J."/>
            <person name="Arakawa T."/>
            <person name="Iida J."/>
            <person name="Imamura K."/>
            <person name="Itoh M."/>
            <person name="Kato T."/>
            <person name="Kawaji H."/>
            <person name="Kawagashira N."/>
            <person name="Kawashima T."/>
            <person name="Kojima M."/>
            <person name="Kondo S."/>
            <person name="Konno H."/>
            <person name="Nakano K."/>
            <person name="Ninomiya N."/>
            <person name="Nishio T."/>
            <person name="Okada M."/>
            <person name="Plessy C."/>
            <person name="Shibata K."/>
            <person name="Shiraki T."/>
            <person name="Suzuki S."/>
            <person name="Tagami M."/>
            <person name="Waki K."/>
            <person name="Watahiki A."/>
            <person name="Okamura-Oho Y."/>
            <person name="Suzuki H."/>
            <person name="Kawai J."/>
            <person name="Hayashizaki Y."/>
        </authorList>
    </citation>
    <scope>NUCLEOTIDE SEQUENCE [LARGE SCALE MRNA]</scope>
    <source>
        <strain>C57BL/6J</strain>
        <tissue>Tongue</tissue>
    </source>
</reference>
<reference key="2">
    <citation type="journal article" date="2010" name="Cell">
        <title>A tissue-specific atlas of mouse protein phosphorylation and expression.</title>
        <authorList>
            <person name="Huttlin E.L."/>
            <person name="Jedrychowski M.P."/>
            <person name="Elias J.E."/>
            <person name="Goswami T."/>
            <person name="Rad R."/>
            <person name="Beausoleil S.A."/>
            <person name="Villen J."/>
            <person name="Haas W."/>
            <person name="Sowa M.E."/>
            <person name="Gygi S.P."/>
        </authorList>
    </citation>
    <scope>IDENTIFICATION BY MASS SPECTROMETRY [LARGE SCALE ANALYSIS]</scope>
    <source>
        <tissue>Pancreas</tissue>
    </source>
</reference>
<reference key="3">
    <citation type="journal article" date="2009" name="Nature">
        <title>Uptake through glycoprotein 2 of FimH(+) bacteria by M cells initiates mucosal immune response.</title>
        <authorList>
            <person name="Hase K."/>
            <person name="Kawano K."/>
            <person name="Nochi T."/>
            <person name="Pontes G.S."/>
            <person name="Fukuda S."/>
            <person name="Ebisawa M."/>
            <person name="Kadokura K."/>
            <person name="Tobe T."/>
            <person name="Fujimura Y."/>
            <person name="Kawano S."/>
            <person name="Yabashi A."/>
            <person name="Waguri S."/>
            <person name="Nakato G."/>
            <person name="Kimura S."/>
            <person name="Murakami T."/>
            <person name="Iimura M."/>
            <person name="Hamura K."/>
            <person name="Fukuoka S."/>
            <person name="Lowe A.W."/>
            <person name="Itoh K."/>
            <person name="Kiyono H."/>
            <person name="Ohno H."/>
        </authorList>
    </citation>
    <scope>FUNCTION</scope>
    <scope>SUBCELLULAR LOCATION</scope>
    <scope>TISSUE SPECIFICITY</scope>
    <scope>DISRUPTION PHENOTYPE</scope>
</reference>
<accession>Q9D733</accession>
<keyword id="KW-1003">Cell membrane</keyword>
<keyword id="KW-0968">Cytoplasmic vesicle</keyword>
<keyword id="KW-1015">Disulfide bond</keyword>
<keyword id="KW-0245">EGF-like domain</keyword>
<keyword id="KW-0967">Endosome</keyword>
<keyword id="KW-0325">Glycoprotein</keyword>
<keyword id="KW-0336">GPI-anchor</keyword>
<keyword id="KW-0391">Immunity</keyword>
<keyword id="KW-0399">Innate immunity</keyword>
<keyword id="KW-0449">Lipoprotein</keyword>
<keyword id="KW-0472">Membrane</keyword>
<keyword id="KW-0675">Receptor</keyword>
<keyword id="KW-1185">Reference proteome</keyword>
<keyword id="KW-0964">Secreted</keyword>
<keyword id="KW-0732">Signal</keyword>
<feature type="signal peptide" evidence="3">
    <location>
        <begin position="1"/>
        <end position="21"/>
    </location>
</feature>
<feature type="chain" id="PRO_0000041659" description="Pancreatic secretory granule membrane major glycoprotein GP2">
    <location>
        <begin position="22"/>
        <end status="unknown"/>
    </location>
</feature>
<feature type="propeptide" id="PRO_0000041660" description="Removed in mature form" evidence="5">
    <location>
        <begin status="unknown"/>
        <end position="531"/>
    </location>
</feature>
<feature type="domain" description="EGF-like" evidence="9">
    <location>
        <begin position="180"/>
        <end position="224"/>
    </location>
</feature>
<feature type="domain" description="ZP" evidence="7">
    <location>
        <begin position="222"/>
        <end position="478"/>
    </location>
</feature>
<feature type="region of interest" description="Beta hairpin" evidence="4">
    <location>
        <begin position="34"/>
        <end position="53"/>
    </location>
</feature>
<feature type="region of interest" description="D10C" evidence="4">
    <location>
        <begin position="54"/>
        <end position="74"/>
    </location>
</feature>
<feature type="region of interest" description="ZP-N" evidence="1">
    <location>
        <begin position="222"/>
        <end position="315"/>
    </location>
</feature>
<feature type="region of interest" description="Flexible ZP-N/ZP-C linker" evidence="1">
    <location>
        <begin position="316"/>
        <end position="339"/>
    </location>
</feature>
<feature type="region of interest" description="ZP-C" evidence="1">
    <location>
        <begin position="340"/>
        <end position="478"/>
    </location>
</feature>
<feature type="region of interest" description="Internal hydrophobic patch (IHP)" evidence="1">
    <location>
        <begin position="340"/>
        <end position="351"/>
    </location>
</feature>
<feature type="region of interest" description="External hydrophobic patch (EHP)" evidence="1">
    <location>
        <begin position="485"/>
        <end position="493"/>
    </location>
</feature>
<feature type="glycosylation site" description="N-linked (GlcNAc...) asparagine" evidence="5">
    <location>
        <position position="33"/>
    </location>
</feature>
<feature type="glycosylation site" description="N-linked (GlcNAc...) asparagine" evidence="5">
    <location>
        <position position="58"/>
    </location>
</feature>
<feature type="glycosylation site" description="N-linked (GlcNAc...) asparagine" evidence="5">
    <location>
        <position position="72"/>
    </location>
</feature>
<feature type="glycosylation site" description="N-linked (GlcNAc...) asparagine" evidence="5">
    <location>
        <position position="200"/>
    </location>
</feature>
<feature type="glycosylation site" description="N-linked (GlcNAc...) asparagine" evidence="5">
    <location>
        <position position="256"/>
    </location>
</feature>
<feature type="glycosylation site" description="N-linked (GlcNAc...) asparagine" evidence="5">
    <location>
        <position position="285"/>
    </location>
</feature>
<feature type="disulfide bond" evidence="4">
    <location>
        <begin position="41"/>
        <end position="52"/>
    </location>
</feature>
<feature type="disulfide bond" evidence="4">
    <location>
        <begin position="56"/>
        <end position="151"/>
    </location>
</feature>
<feature type="disulfide bond" evidence="4">
    <location>
        <begin position="79"/>
        <end position="169"/>
    </location>
</feature>
<feature type="disulfide bond" evidence="4">
    <location>
        <begin position="101"/>
        <end position="139"/>
    </location>
</feature>
<feature type="disulfide bond" evidence="4">
    <location>
        <begin position="107"/>
        <end position="174"/>
    </location>
</feature>
<feature type="disulfide bond" evidence="4">
    <location>
        <begin position="132"/>
        <end position="140"/>
    </location>
</feature>
<feature type="disulfide bond" evidence="1">
    <location>
        <begin position="184"/>
        <end position="194"/>
    </location>
</feature>
<feature type="disulfide bond" evidence="1">
    <location>
        <begin position="188"/>
        <end position="203"/>
    </location>
</feature>
<feature type="disulfide bond" evidence="1">
    <location>
        <begin position="205"/>
        <end position="235"/>
    </location>
</feature>
<feature type="disulfide bond" evidence="1">
    <location>
        <begin position="223"/>
        <end position="314"/>
    </location>
</feature>
<feature type="disulfide bond" evidence="1">
    <location>
        <begin position="255"/>
        <end position="278"/>
    </location>
</feature>
<feature type="disulfide bond" evidence="1 6">
    <location>
        <begin position="395"/>
        <end position="455"/>
    </location>
</feature>
<feature type="disulfide bond" evidence="1">
    <location>
        <begin position="416"/>
        <end position="471"/>
    </location>
</feature>
<feature type="disulfide bond" evidence="1">
    <location>
        <begin position="460"/>
        <end position="467"/>
    </location>
</feature>
<name>GP2_MOUSE</name>
<dbReference type="EMBL" id="AK009661">
    <property type="protein sequence ID" value="BAB26423.2"/>
    <property type="status" value="ALT_INIT"/>
    <property type="molecule type" value="mRNA"/>
</dbReference>
<dbReference type="CCDS" id="CCDS21779.1"/>
<dbReference type="RefSeq" id="NP_080265.2">
    <property type="nucleotide sequence ID" value="NM_025989.3"/>
</dbReference>
<dbReference type="SMR" id="Q9D733"/>
<dbReference type="FunCoup" id="Q9D733">
    <property type="interactions" value="34"/>
</dbReference>
<dbReference type="STRING" id="10090.ENSMUSP00000033255"/>
<dbReference type="GlyCosmos" id="Q9D733">
    <property type="glycosylation" value="6 sites, No reported glycans"/>
</dbReference>
<dbReference type="GlyGen" id="Q9D733">
    <property type="glycosylation" value="7 sites"/>
</dbReference>
<dbReference type="iPTMnet" id="Q9D733"/>
<dbReference type="PhosphoSitePlus" id="Q9D733"/>
<dbReference type="PaxDb" id="10090-ENSMUSP00000033255"/>
<dbReference type="ProteomicsDB" id="271260"/>
<dbReference type="Antibodypedia" id="2620">
    <property type="antibodies" value="445 antibodies from 22 providers"/>
</dbReference>
<dbReference type="DNASU" id="67133"/>
<dbReference type="Ensembl" id="ENSMUST00000033255.8">
    <property type="protein sequence ID" value="ENSMUSP00000033255.7"/>
    <property type="gene ID" value="ENSMUSG00000030954.12"/>
</dbReference>
<dbReference type="GeneID" id="67133"/>
<dbReference type="KEGG" id="mmu:67133"/>
<dbReference type="UCSC" id="uc009jla.1">
    <property type="organism name" value="mouse"/>
</dbReference>
<dbReference type="AGR" id="MGI:1914383"/>
<dbReference type="CTD" id="2813"/>
<dbReference type="MGI" id="MGI:1914383">
    <property type="gene designation" value="Gp2"/>
</dbReference>
<dbReference type="VEuPathDB" id="HostDB:ENSMUSG00000030954"/>
<dbReference type="eggNOG" id="ENOG502QT6B">
    <property type="taxonomic scope" value="Eukaryota"/>
</dbReference>
<dbReference type="GeneTree" id="ENSGT00940000156038"/>
<dbReference type="InParanoid" id="Q9D733"/>
<dbReference type="OMA" id="AHICFDP"/>
<dbReference type="PhylomeDB" id="Q9D733"/>
<dbReference type="TreeFam" id="TF330284"/>
<dbReference type="Reactome" id="R-MMU-163125">
    <property type="pathway name" value="Post-translational modification: synthesis of GPI-anchored proteins"/>
</dbReference>
<dbReference type="BioGRID-ORCS" id="67133">
    <property type="hits" value="0 hits in 77 CRISPR screens"/>
</dbReference>
<dbReference type="PRO" id="PR:Q9D733"/>
<dbReference type="Proteomes" id="UP000000589">
    <property type="component" value="Chromosome 7"/>
</dbReference>
<dbReference type="RNAct" id="Q9D733">
    <property type="molecule type" value="protein"/>
</dbReference>
<dbReference type="Bgee" id="ENSMUSG00000030954">
    <property type="expression patterns" value="Expressed in pyloric antrum and 33 other cell types or tissues"/>
</dbReference>
<dbReference type="ExpressionAtlas" id="Q9D733">
    <property type="expression patterns" value="baseline and differential"/>
</dbReference>
<dbReference type="GO" id="GO:0016324">
    <property type="term" value="C:apical plasma membrane"/>
    <property type="evidence" value="ECO:0000314"/>
    <property type="project" value="MGI"/>
</dbReference>
<dbReference type="GO" id="GO:0005768">
    <property type="term" value="C:endosome"/>
    <property type="evidence" value="ECO:0000314"/>
    <property type="project" value="UniProtKB"/>
</dbReference>
<dbReference type="GO" id="GO:0009897">
    <property type="term" value="C:external side of plasma membrane"/>
    <property type="evidence" value="ECO:0000250"/>
    <property type="project" value="UniProtKB"/>
</dbReference>
<dbReference type="GO" id="GO:0005615">
    <property type="term" value="C:extracellular space"/>
    <property type="evidence" value="ECO:0000250"/>
    <property type="project" value="UniProtKB"/>
</dbReference>
<dbReference type="GO" id="GO:0045121">
    <property type="term" value="C:membrane raft"/>
    <property type="evidence" value="ECO:0007669"/>
    <property type="project" value="UniProtKB-SubCell"/>
</dbReference>
<dbReference type="GO" id="GO:0042589">
    <property type="term" value="C:zymogen granule membrane"/>
    <property type="evidence" value="ECO:0000250"/>
    <property type="project" value="UniProtKB"/>
</dbReference>
<dbReference type="GO" id="GO:0003823">
    <property type="term" value="F:antigen binding"/>
    <property type="evidence" value="ECO:0000314"/>
    <property type="project" value="MGI"/>
</dbReference>
<dbReference type="GO" id="GO:0002412">
    <property type="term" value="P:antigen transcytosis by M cells in mucosal-associated lymphoid tissue"/>
    <property type="evidence" value="ECO:0000314"/>
    <property type="project" value="MGI"/>
</dbReference>
<dbReference type="GO" id="GO:0051649">
    <property type="term" value="P:establishment of localization in cell"/>
    <property type="evidence" value="ECO:0000314"/>
    <property type="project" value="MGI"/>
</dbReference>
<dbReference type="GO" id="GO:0045087">
    <property type="term" value="P:innate immune response"/>
    <property type="evidence" value="ECO:0007669"/>
    <property type="project" value="UniProtKB-KW"/>
</dbReference>
<dbReference type="FunFam" id="2.60.40.4100:FF:000001">
    <property type="entry name" value="alpha-tectorin isoform X1"/>
    <property type="match status" value="1"/>
</dbReference>
<dbReference type="FunFam" id="2.60.40.3210:FF:000003">
    <property type="entry name" value="Glycoprotein 2"/>
    <property type="match status" value="1"/>
</dbReference>
<dbReference type="Gene3D" id="2.60.40.4100">
    <property type="entry name" value="Zona pellucida, ZP-C domain"/>
    <property type="match status" value="1"/>
</dbReference>
<dbReference type="Gene3D" id="2.60.40.3210">
    <property type="entry name" value="Zona pellucida, ZP-N domain"/>
    <property type="match status" value="1"/>
</dbReference>
<dbReference type="InterPro" id="IPR055355">
    <property type="entry name" value="ZP-C"/>
</dbReference>
<dbReference type="InterPro" id="IPR042235">
    <property type="entry name" value="ZP-C_dom"/>
</dbReference>
<dbReference type="InterPro" id="IPR055356">
    <property type="entry name" value="ZP-N"/>
</dbReference>
<dbReference type="InterPro" id="IPR048290">
    <property type="entry name" value="ZP_chr"/>
</dbReference>
<dbReference type="InterPro" id="IPR001507">
    <property type="entry name" value="ZP_dom"/>
</dbReference>
<dbReference type="PANTHER" id="PTHR14002">
    <property type="entry name" value="ENDOGLIN/TGF-BETA RECEPTOR TYPE III"/>
    <property type="match status" value="1"/>
</dbReference>
<dbReference type="PANTHER" id="PTHR14002:SF16">
    <property type="entry name" value="PANCREATIC SECRETORY GRANULE MEMBRANE MAJOR GLYCOPROTEIN GP2"/>
    <property type="match status" value="1"/>
</dbReference>
<dbReference type="Pfam" id="PF23283">
    <property type="entry name" value="D8C_UMOD"/>
    <property type="match status" value="1"/>
</dbReference>
<dbReference type="Pfam" id="PF00100">
    <property type="entry name" value="Zona_pellucida"/>
    <property type="match status" value="1"/>
</dbReference>
<dbReference type="Pfam" id="PF23344">
    <property type="entry name" value="ZP-N"/>
    <property type="match status" value="1"/>
</dbReference>
<dbReference type="PRINTS" id="PR00023">
    <property type="entry name" value="ZPELLUCIDA"/>
</dbReference>
<dbReference type="SMART" id="SM00241">
    <property type="entry name" value="ZP"/>
    <property type="match status" value="1"/>
</dbReference>
<dbReference type="PROSITE" id="PS51034">
    <property type="entry name" value="ZP_2"/>
    <property type="match status" value="1"/>
</dbReference>
<protein>
    <recommendedName>
        <fullName evidence="9">Pancreatic secretory granule membrane major glycoprotein GP2</fullName>
    </recommendedName>
    <alternativeName>
        <fullName evidence="4">Pancreatic zymogen granule membrane protein GP-2</fullName>
    </alternativeName>
</protein>
<comment type="function">
    <text evidence="8">Functions as an intestinal M-cell transcytotic receptor specific of type-I-piliated bacteria that participates in the mucosal immune response toward these bacteria. At the apical membrane of M-cells it binds fimH, a protein of the bacteria type I pilus tip. Internalizes bound bacteria, like E.coli and S.typhimurium, from the lumen of the intestine and delivers them, through M-cells, to the underlying organized lymphoid follicles where they are captured by antigen-presenting dendritic cells to elicit a mucosal immune response.</text>
</comment>
<comment type="subunit">
    <text evidence="2">Interacts with SYCN. Interacts with bacterial adhesin fimH.</text>
</comment>
<comment type="subcellular location">
    <subcellularLocation>
        <location evidence="2">Zymogen granule membrane</location>
        <topology evidence="2">Lipid-anchor</topology>
        <topology evidence="2">GPI-anchor</topology>
    </subcellularLocation>
    <subcellularLocation>
        <location evidence="2">Secreted</location>
    </subcellularLocation>
    <subcellularLocation>
        <location evidence="10">Cell membrane</location>
        <topology evidence="2">Lipid-anchor</topology>
        <topology evidence="2">GPI-anchor</topology>
    </subcellularLocation>
    <subcellularLocation>
        <location evidence="8">Apical cell membrane</location>
        <topology evidence="2">Lipid-anchor</topology>
        <topology evidence="2">GPI-anchor</topology>
    </subcellularLocation>
    <subcellularLocation>
        <location evidence="2">Membrane raft</location>
        <topology evidence="2">Lipid-anchor</topology>
        <topology evidence="2">GPI-anchor</topology>
    </subcellularLocation>
    <subcellularLocation>
        <location evidence="10">Endosome</location>
    </subcellularLocation>
    <text evidence="2">Secreted, after cleavage, in the pancreatic juice.</text>
</comment>
<comment type="tissue specificity">
    <text evidence="8">Specifically expressed by M (microfold) cells which are atypical epithelial cells of the intestine.</text>
</comment>
<comment type="domain">
    <text evidence="1">Each ZP domain consists of an N-terminal (ZP-N) and C-terminal (ZP-C) region connected by a flexible linker; the linker allows the ZP domain to wrap around the ZP-C subdomain of the preceding subunit.</text>
</comment>
<comment type="PTM">
    <text evidence="2">N-glycosylated.</text>
</comment>
<comment type="disruption phenotype">
    <text evidence="8">Knockout mice lacking Gp2 fail to induce antigen-specific helper-T-cells and antibody immune responses after oral immunization with FimH positive bacteria (PubMed:19907495). This is not due to a general defect in the immunological functions, since a normal response is induced by other systemic immunizations (PubMed:19907495).</text>
</comment>
<comment type="sequence caution" evidence="9">
    <conflict type="erroneous initiation">
        <sequence resource="EMBL-CDS" id="BAB26423"/>
    </conflict>
</comment>
<organism>
    <name type="scientific">Mus musculus</name>
    <name type="common">Mouse</name>
    <dbReference type="NCBI Taxonomy" id="10090"/>
    <lineage>
        <taxon>Eukaryota</taxon>
        <taxon>Metazoa</taxon>
        <taxon>Chordata</taxon>
        <taxon>Craniata</taxon>
        <taxon>Vertebrata</taxon>
        <taxon>Euteleostomi</taxon>
        <taxon>Mammalia</taxon>
        <taxon>Eutheria</taxon>
        <taxon>Euarchontoglires</taxon>
        <taxon>Glires</taxon>
        <taxon>Rodentia</taxon>
        <taxon>Myomorpha</taxon>
        <taxon>Muroidea</taxon>
        <taxon>Muridae</taxon>
        <taxon>Murinae</taxon>
        <taxon>Mus</taxon>
        <taxon>Mus</taxon>
    </lineage>
</organism>
<sequence>MVGCDLLWLAAASCVLTLVSPSTIHQGYGRPRNSSNLDLDCGSPDSPSSGICFDPCQNHTVLNDPTRSTENNDSSVAWCDDNLHGWYRFVGDGGVKMPETCVSVFRCHTSAPMWLSGSHPILGDGIVSHTACANWNENCCFWRSEVQVKACSEELGEYHVYKLQGTPECSLRYCTDPSTAPKNCEITCRPEEECVFQNNNWSCVCRQDLHVSDSQSLQPLLDCGDNEIKVKLDKCLLGGMGFKEEIIAYLNDRNCNGTMQDEPNNWVSMTSPVVANYCGNILEKNGTHAIYRNTLSLATDFIIRDFRVNVNFQCAYPLDMSVSLETALQPIVSSLTVDVDGAGEFNVKMALFQDQSYTNPYEGAEVLLPVESILYVGVLLNRGDTSRFKLLLTNCYATPSEDRHDPVKYFIIKNRCPNQRDSTINVRENGVSSESRFSVQMFMFAGNYDLVFLHCEVYLCDSTTEQCQPSCSTNRLRSSRPAIDYNRVLDLGPITKRSAQSSATSKGTPHTTGFLLAWPMFFLPVFLALLF</sequence>
<gene>
    <name evidence="11" type="primary">Gp2</name>
</gene>
<evidence type="ECO:0000250" key="1">
    <source>
        <dbReference type="UniProtKB" id="P07911"/>
    </source>
</evidence>
<evidence type="ECO:0000250" key="2">
    <source>
        <dbReference type="UniProtKB" id="P19218"/>
    </source>
</evidence>
<evidence type="ECO:0000250" key="3">
    <source>
        <dbReference type="UniProtKB" id="P25291"/>
    </source>
</evidence>
<evidence type="ECO:0000250" key="4">
    <source>
        <dbReference type="UniProtKB" id="P55259"/>
    </source>
</evidence>
<evidence type="ECO:0000255" key="5"/>
<evidence type="ECO:0000255" key="6">
    <source>
        <dbReference type="PROSITE-ProRule" id="PRU00076"/>
    </source>
</evidence>
<evidence type="ECO:0000255" key="7">
    <source>
        <dbReference type="PROSITE-ProRule" id="PRU00375"/>
    </source>
</evidence>
<evidence type="ECO:0000269" key="8">
    <source>
    </source>
</evidence>
<evidence type="ECO:0000305" key="9"/>
<evidence type="ECO:0000305" key="10">
    <source>
    </source>
</evidence>
<evidence type="ECO:0000312" key="11">
    <source>
        <dbReference type="MGI" id="MGI:1914383"/>
    </source>
</evidence>
<proteinExistence type="evidence at protein level"/>